<gene>
    <name type="primary">EVX2</name>
</gene>
<name>EVX2_HUMAN</name>
<evidence type="ECO:0000255" key="1">
    <source>
        <dbReference type="PROSITE-ProRule" id="PRU00108"/>
    </source>
</evidence>
<evidence type="ECO:0000256" key="2">
    <source>
        <dbReference type="SAM" id="MobiDB-lite"/>
    </source>
</evidence>
<evidence type="ECO:0000305" key="3"/>
<accession>Q03828</accession>
<comment type="interaction">
    <interactant intactId="EBI-17280301">
        <id>Q03828</id>
    </interactant>
    <interactant intactId="EBI-1055244">
        <id>P59826</id>
        <label>BPIFB3</label>
    </interactant>
    <organismsDiffer>false</organismsDiffer>
    <experiments>3</experiments>
</comment>
<comment type="interaction">
    <interactant intactId="EBI-17280301">
        <id>Q03828</id>
    </interactant>
    <interactant intactId="EBI-12819063">
        <id>Q9BYD5</id>
        <label>CNFN</label>
    </interactant>
    <organismsDiffer>false</organismsDiffer>
    <experiments>3</experiments>
</comment>
<comment type="interaction">
    <interactant intactId="EBI-17280301">
        <id>Q03828</id>
    </interactant>
    <interactant intactId="EBI-13309711">
        <id>Q99766-3</id>
        <label>DMAC2L</label>
    </interactant>
    <organismsDiffer>false</organismsDiffer>
    <experiments>3</experiments>
</comment>
<comment type="interaction">
    <interactant intactId="EBI-17280301">
        <id>Q03828</id>
    </interactant>
    <interactant intactId="EBI-11028396">
        <id>Q6UXX5</id>
        <label>ITIH6</label>
    </interactant>
    <organismsDiffer>false</organismsDiffer>
    <experiments>3</experiments>
</comment>
<comment type="interaction">
    <interactant intactId="EBI-17280301">
        <id>Q03828</id>
    </interactant>
    <interactant intactId="EBI-1048945">
        <id>Q3LI72</id>
        <label>KRTAP19-5</label>
    </interactant>
    <organismsDiffer>false</organismsDiffer>
    <experiments>3</experiments>
</comment>
<comment type="interaction">
    <interactant intactId="EBI-17280301">
        <id>Q03828</id>
    </interactant>
    <interactant intactId="EBI-10241353">
        <id>Q3SYF9</id>
        <label>KRTAP19-7</label>
    </interactant>
    <organismsDiffer>false</organismsDiffer>
    <experiments>3</experiments>
</comment>
<comment type="interaction">
    <interactant intactId="EBI-17280301">
        <id>Q03828</id>
    </interactant>
    <interactant intactId="EBI-12111050">
        <id>Q3LI64</id>
        <label>KRTAP6-1</label>
    </interactant>
    <organismsDiffer>false</organismsDiffer>
    <experiments>3</experiments>
</comment>
<comment type="interaction">
    <interactant intactId="EBI-17280301">
        <id>Q03828</id>
    </interactant>
    <interactant intactId="EBI-9088686">
        <id>Q14847-2</id>
        <label>LASP1</label>
    </interactant>
    <organismsDiffer>false</organismsDiffer>
    <experiments>3</experiments>
</comment>
<comment type="interaction">
    <interactant intactId="EBI-17280301">
        <id>Q03828</id>
    </interactant>
    <interactant intactId="EBI-12030590">
        <id>Q9H0C1</id>
        <label>ZMYND12</label>
    </interactant>
    <organismsDiffer>false</organismsDiffer>
    <experiments>3</experiments>
</comment>
<comment type="subcellular location">
    <subcellularLocation>
        <location>Nucleus</location>
    </subcellularLocation>
</comment>
<comment type="developmental stage">
    <text>Expressed during early embryogenesis and neurogenesis in a biphasic manner.</text>
</comment>
<comment type="similarity">
    <text evidence="3">Belongs to the even-skipped homeobox family.</text>
</comment>
<organism>
    <name type="scientific">Homo sapiens</name>
    <name type="common">Human</name>
    <dbReference type="NCBI Taxonomy" id="9606"/>
    <lineage>
        <taxon>Eukaryota</taxon>
        <taxon>Metazoa</taxon>
        <taxon>Chordata</taxon>
        <taxon>Craniata</taxon>
        <taxon>Vertebrata</taxon>
        <taxon>Euteleostomi</taxon>
        <taxon>Mammalia</taxon>
        <taxon>Eutheria</taxon>
        <taxon>Euarchontoglires</taxon>
        <taxon>Primates</taxon>
        <taxon>Haplorrhini</taxon>
        <taxon>Catarrhini</taxon>
        <taxon>Hominidae</taxon>
        <taxon>Homo</taxon>
    </lineage>
</organism>
<reference key="1">
    <citation type="journal article" date="2005" name="Nature">
        <title>Generation and annotation of the DNA sequences of human chromosomes 2 and 4.</title>
        <authorList>
            <person name="Hillier L.W."/>
            <person name="Graves T.A."/>
            <person name="Fulton R.S."/>
            <person name="Fulton L.A."/>
            <person name="Pepin K.H."/>
            <person name="Minx P."/>
            <person name="Wagner-McPherson C."/>
            <person name="Layman D."/>
            <person name="Wylie K."/>
            <person name="Sekhon M."/>
            <person name="Becker M.C."/>
            <person name="Fewell G.A."/>
            <person name="Delehaunty K.D."/>
            <person name="Miner T.L."/>
            <person name="Nash W.E."/>
            <person name="Kremitzki C."/>
            <person name="Oddy L."/>
            <person name="Du H."/>
            <person name="Sun H."/>
            <person name="Bradshaw-Cordum H."/>
            <person name="Ali J."/>
            <person name="Carter J."/>
            <person name="Cordes M."/>
            <person name="Harris A."/>
            <person name="Isak A."/>
            <person name="van Brunt A."/>
            <person name="Nguyen C."/>
            <person name="Du F."/>
            <person name="Courtney L."/>
            <person name="Kalicki J."/>
            <person name="Ozersky P."/>
            <person name="Abbott S."/>
            <person name="Armstrong J."/>
            <person name="Belter E.A."/>
            <person name="Caruso L."/>
            <person name="Cedroni M."/>
            <person name="Cotton M."/>
            <person name="Davidson T."/>
            <person name="Desai A."/>
            <person name="Elliott G."/>
            <person name="Erb T."/>
            <person name="Fronick C."/>
            <person name="Gaige T."/>
            <person name="Haakenson W."/>
            <person name="Haglund K."/>
            <person name="Holmes A."/>
            <person name="Harkins R."/>
            <person name="Kim K."/>
            <person name="Kruchowski S.S."/>
            <person name="Strong C.M."/>
            <person name="Grewal N."/>
            <person name="Goyea E."/>
            <person name="Hou S."/>
            <person name="Levy A."/>
            <person name="Martinka S."/>
            <person name="Mead K."/>
            <person name="McLellan M.D."/>
            <person name="Meyer R."/>
            <person name="Randall-Maher J."/>
            <person name="Tomlinson C."/>
            <person name="Dauphin-Kohlberg S."/>
            <person name="Kozlowicz-Reilly A."/>
            <person name="Shah N."/>
            <person name="Swearengen-Shahid S."/>
            <person name="Snider J."/>
            <person name="Strong J.T."/>
            <person name="Thompson J."/>
            <person name="Yoakum M."/>
            <person name="Leonard S."/>
            <person name="Pearman C."/>
            <person name="Trani L."/>
            <person name="Radionenko M."/>
            <person name="Waligorski J.E."/>
            <person name="Wang C."/>
            <person name="Rock S.M."/>
            <person name="Tin-Wollam A.-M."/>
            <person name="Maupin R."/>
            <person name="Latreille P."/>
            <person name="Wendl M.C."/>
            <person name="Yang S.-P."/>
            <person name="Pohl C."/>
            <person name="Wallis J.W."/>
            <person name="Spieth J."/>
            <person name="Bieri T.A."/>
            <person name="Berkowicz N."/>
            <person name="Nelson J.O."/>
            <person name="Osborne J."/>
            <person name="Ding L."/>
            <person name="Meyer R."/>
            <person name="Sabo A."/>
            <person name="Shotland Y."/>
            <person name="Sinha P."/>
            <person name="Wohldmann P.E."/>
            <person name="Cook L.L."/>
            <person name="Hickenbotham M.T."/>
            <person name="Eldred J."/>
            <person name="Williams D."/>
            <person name="Jones T.A."/>
            <person name="She X."/>
            <person name="Ciccarelli F.D."/>
            <person name="Izaurralde E."/>
            <person name="Taylor J."/>
            <person name="Schmutz J."/>
            <person name="Myers R.M."/>
            <person name="Cox D.R."/>
            <person name="Huang X."/>
            <person name="McPherson J.D."/>
            <person name="Mardis E.R."/>
            <person name="Clifton S.W."/>
            <person name="Warren W.C."/>
            <person name="Chinwalla A.T."/>
            <person name="Eddy S.R."/>
            <person name="Marra M.A."/>
            <person name="Ovcharenko I."/>
            <person name="Furey T.S."/>
            <person name="Miller W."/>
            <person name="Eichler E.E."/>
            <person name="Bork P."/>
            <person name="Suyama M."/>
            <person name="Torrents D."/>
            <person name="Waterston R.H."/>
            <person name="Wilson R.K."/>
        </authorList>
    </citation>
    <scope>NUCLEOTIDE SEQUENCE [LARGE SCALE GENOMIC DNA]</scope>
</reference>
<reference key="2">
    <citation type="journal article" date="1991" name="Genomics">
        <title>EVX2, a human homeobox gene homologous to the even-skipped segmentation gene, is localized at the 5' end of HOX4 locus on chromosome 2.</title>
        <authorList>
            <person name="D'Esposito M."/>
            <person name="Morelli F."/>
            <person name="Acampora D."/>
            <person name="Migliaccio E."/>
            <person name="Simeone A."/>
            <person name="Boncinelli E."/>
        </authorList>
    </citation>
    <scope>NUCLEOTIDE SEQUENCE [GENOMIC DNA] OF 144-300</scope>
</reference>
<protein>
    <recommendedName>
        <fullName>Homeobox even-skipped homolog protein 2</fullName>
    </recommendedName>
    <alternativeName>
        <fullName>EVX-2</fullName>
    </alternativeName>
</protein>
<dbReference type="EMBL" id="AC009336">
    <property type="status" value="NOT_ANNOTATED_CDS"/>
    <property type="molecule type" value="Genomic_DNA"/>
</dbReference>
<dbReference type="EMBL" id="M59983">
    <property type="protein sequence ID" value="AAA52414.1"/>
    <property type="molecule type" value="Genomic_DNA"/>
</dbReference>
<dbReference type="EMBL" id="M59982">
    <property type="protein sequence ID" value="AAA52414.1"/>
    <property type="status" value="JOINED"/>
    <property type="molecule type" value="Genomic_DNA"/>
</dbReference>
<dbReference type="CCDS" id="CCDS33333.1"/>
<dbReference type="PIR" id="A39065">
    <property type="entry name" value="A39065"/>
</dbReference>
<dbReference type="RefSeq" id="NP_001073927.1">
    <property type="nucleotide sequence ID" value="NM_001080458.2"/>
</dbReference>
<dbReference type="SMR" id="Q03828"/>
<dbReference type="BioGRID" id="131293">
    <property type="interactions" value="9"/>
</dbReference>
<dbReference type="FunCoup" id="Q03828">
    <property type="interactions" value="587"/>
</dbReference>
<dbReference type="IntAct" id="Q03828">
    <property type="interactions" value="9"/>
</dbReference>
<dbReference type="STRING" id="9606.ENSP00000312385"/>
<dbReference type="BioMuta" id="EVX2"/>
<dbReference type="DMDM" id="12231013"/>
<dbReference type="MassIVE" id="Q03828"/>
<dbReference type="PaxDb" id="9606-ENSP00000312385"/>
<dbReference type="PeptideAtlas" id="Q03828"/>
<dbReference type="ProteomicsDB" id="58223"/>
<dbReference type="Antibodypedia" id="19511">
    <property type="antibodies" value="142 antibodies from 23 providers"/>
</dbReference>
<dbReference type="DNASU" id="344191"/>
<dbReference type="Ensembl" id="ENST00000308618.5">
    <property type="protein sequence ID" value="ENSP00000312385.4"/>
    <property type="gene ID" value="ENSG00000174279.5"/>
</dbReference>
<dbReference type="GeneID" id="344191"/>
<dbReference type="KEGG" id="hsa:344191"/>
<dbReference type="MANE-Select" id="ENST00000308618.5">
    <property type="protein sequence ID" value="ENSP00000312385.4"/>
    <property type="RefSeq nucleotide sequence ID" value="NM_001080458.2"/>
    <property type="RefSeq protein sequence ID" value="NP_001073927.1"/>
</dbReference>
<dbReference type="UCSC" id="uc010zeu.3">
    <property type="organism name" value="human"/>
</dbReference>
<dbReference type="AGR" id="HGNC:3507"/>
<dbReference type="CTD" id="344191"/>
<dbReference type="DisGeNET" id="344191"/>
<dbReference type="GeneCards" id="EVX2"/>
<dbReference type="HGNC" id="HGNC:3507">
    <property type="gene designation" value="EVX2"/>
</dbReference>
<dbReference type="HPA" id="ENSG00000174279">
    <property type="expression patterns" value="Tissue enhanced (cervix, prostate, seminal vesicle, testis, vagina)"/>
</dbReference>
<dbReference type="MIM" id="142991">
    <property type="type" value="gene"/>
</dbReference>
<dbReference type="neXtProt" id="NX_Q03828"/>
<dbReference type="OpenTargets" id="ENSG00000174279"/>
<dbReference type="PharmGKB" id="PA27920"/>
<dbReference type="VEuPathDB" id="HostDB:ENSG00000174279"/>
<dbReference type="eggNOG" id="KOG0844">
    <property type="taxonomic scope" value="Eukaryota"/>
</dbReference>
<dbReference type="GeneTree" id="ENSGT00940000161025"/>
<dbReference type="HOGENOM" id="CLU_045075_0_0_1"/>
<dbReference type="InParanoid" id="Q03828"/>
<dbReference type="OMA" id="NKGYAES"/>
<dbReference type="OrthoDB" id="6159439at2759"/>
<dbReference type="PAN-GO" id="Q03828">
    <property type="GO annotations" value="4 GO annotations based on evolutionary models"/>
</dbReference>
<dbReference type="PhylomeDB" id="Q03828"/>
<dbReference type="TreeFam" id="TF315938"/>
<dbReference type="PathwayCommons" id="Q03828"/>
<dbReference type="SignaLink" id="Q03828"/>
<dbReference type="BioGRID-ORCS" id="344191">
    <property type="hits" value="16 hits in 1173 CRISPR screens"/>
</dbReference>
<dbReference type="GenomeRNAi" id="344191"/>
<dbReference type="Pharos" id="Q03828">
    <property type="development level" value="Tbio"/>
</dbReference>
<dbReference type="PRO" id="PR:Q03828"/>
<dbReference type="Proteomes" id="UP000005640">
    <property type="component" value="Chromosome 2"/>
</dbReference>
<dbReference type="RNAct" id="Q03828">
    <property type="molecule type" value="protein"/>
</dbReference>
<dbReference type="Bgee" id="ENSG00000174279">
    <property type="expression patterns" value="Expressed in male germ line stem cell (sensu Vertebrata) in testis and 16 other cell types or tissues"/>
</dbReference>
<dbReference type="GO" id="GO:0000785">
    <property type="term" value="C:chromatin"/>
    <property type="evidence" value="ECO:0000247"/>
    <property type="project" value="NTNU_SB"/>
</dbReference>
<dbReference type="GO" id="GO:0005634">
    <property type="term" value="C:nucleus"/>
    <property type="evidence" value="ECO:0000318"/>
    <property type="project" value="GO_Central"/>
</dbReference>
<dbReference type="GO" id="GO:0000981">
    <property type="term" value="F:DNA-binding transcription factor activity, RNA polymerase II-specific"/>
    <property type="evidence" value="ECO:0000247"/>
    <property type="project" value="NTNU_SB"/>
</dbReference>
<dbReference type="GO" id="GO:0000978">
    <property type="term" value="F:RNA polymerase II cis-regulatory region sequence-specific DNA binding"/>
    <property type="evidence" value="ECO:0000318"/>
    <property type="project" value="GO_Central"/>
</dbReference>
<dbReference type="GO" id="GO:1990837">
    <property type="term" value="F:sequence-specific double-stranded DNA binding"/>
    <property type="evidence" value="ECO:0000314"/>
    <property type="project" value="ARUK-UCL"/>
</dbReference>
<dbReference type="GO" id="GO:0035108">
    <property type="term" value="P:limb morphogenesis"/>
    <property type="evidence" value="ECO:0007669"/>
    <property type="project" value="Ensembl"/>
</dbReference>
<dbReference type="GO" id="GO:0006357">
    <property type="term" value="P:regulation of transcription by RNA polymerase II"/>
    <property type="evidence" value="ECO:0000318"/>
    <property type="project" value="GO_Central"/>
</dbReference>
<dbReference type="CDD" id="cd00086">
    <property type="entry name" value="homeodomain"/>
    <property type="match status" value="1"/>
</dbReference>
<dbReference type="FunFam" id="1.10.10.60:FF:000367">
    <property type="entry name" value="homeobox even-skipped homolog protein 2"/>
    <property type="match status" value="1"/>
</dbReference>
<dbReference type="Gene3D" id="1.10.10.60">
    <property type="entry name" value="Homeodomain-like"/>
    <property type="match status" value="1"/>
</dbReference>
<dbReference type="InterPro" id="IPR052002">
    <property type="entry name" value="Even-skipped_HD"/>
</dbReference>
<dbReference type="InterPro" id="IPR001356">
    <property type="entry name" value="HD"/>
</dbReference>
<dbReference type="InterPro" id="IPR020479">
    <property type="entry name" value="HD_metazoa"/>
</dbReference>
<dbReference type="InterPro" id="IPR017970">
    <property type="entry name" value="Homeobox_CS"/>
</dbReference>
<dbReference type="InterPro" id="IPR009057">
    <property type="entry name" value="Homeodomain-like_sf"/>
</dbReference>
<dbReference type="PANTHER" id="PTHR46294:SF1">
    <property type="entry name" value="HOMEOBOX EVEN-SKIPPED HOMOLOG PROTEIN 2"/>
    <property type="match status" value="1"/>
</dbReference>
<dbReference type="PANTHER" id="PTHR46294">
    <property type="entry name" value="SEGMENTATION PROTEIN EVEN-SKIPPED"/>
    <property type="match status" value="1"/>
</dbReference>
<dbReference type="Pfam" id="PF00046">
    <property type="entry name" value="Homeodomain"/>
    <property type="match status" value="1"/>
</dbReference>
<dbReference type="PRINTS" id="PR00024">
    <property type="entry name" value="HOMEOBOX"/>
</dbReference>
<dbReference type="SMART" id="SM00389">
    <property type="entry name" value="HOX"/>
    <property type="match status" value="1"/>
</dbReference>
<dbReference type="SUPFAM" id="SSF46689">
    <property type="entry name" value="Homeodomain-like"/>
    <property type="match status" value="1"/>
</dbReference>
<dbReference type="PROSITE" id="PS00027">
    <property type="entry name" value="HOMEOBOX_1"/>
    <property type="match status" value="1"/>
</dbReference>
<dbReference type="PROSITE" id="PS50071">
    <property type="entry name" value="HOMEOBOX_2"/>
    <property type="match status" value="1"/>
</dbReference>
<proteinExistence type="evidence at protein level"/>
<keyword id="KW-0217">Developmental protein</keyword>
<keyword id="KW-0238">DNA-binding</keyword>
<keyword id="KW-0371">Homeobox</keyword>
<keyword id="KW-0539">Nucleus</keyword>
<keyword id="KW-1267">Proteomics identification</keyword>
<keyword id="KW-1185">Reference proteome</keyword>
<feature type="chain" id="PRO_0000048872" description="Homeobox even-skipped homolog protein 2">
    <location>
        <begin position="1"/>
        <end position="476"/>
    </location>
</feature>
<feature type="DNA-binding region" description="Homeobox" evidence="1">
    <location>
        <begin position="188"/>
        <end position="247"/>
    </location>
</feature>
<feature type="region of interest" description="Disordered" evidence="2">
    <location>
        <begin position="82"/>
        <end position="113"/>
    </location>
</feature>
<feature type="region of interest" description="Disordered" evidence="2">
    <location>
        <begin position="142"/>
        <end position="185"/>
    </location>
</feature>
<feature type="compositionally biased region" description="Low complexity" evidence="2">
    <location>
        <begin position="84"/>
        <end position="96"/>
    </location>
</feature>
<feature type="compositionally biased region" description="Low complexity" evidence="2">
    <location>
        <begin position="147"/>
        <end position="159"/>
    </location>
</feature>
<feature type="compositionally biased region" description="Gly residues" evidence="2">
    <location>
        <begin position="160"/>
        <end position="183"/>
    </location>
</feature>
<sequence>MMERIRKEMILMERGLHSPTAGKRFSNLSNSAGNAVLEALENSQHPARLSPRLPSAPLHSALGELPAKGKFEIDTLFNLQHTGSESTVSSEISSAAESRKKPGHYSEAAAEADMSSDVEVGCSALRSPGGLGAAQLKENNGKGYAESGSAAGTTTSASGSGLGSLHGGSGGSGGSAALGGSGSGADQVRRYRTAFTREQIARLEKEFYRENYVSRPRRCELAAALNLPETTIKVWFQNRRMKDKRQRLAMSWPHPADPSFYTYMMTHAAATGSLPYPFHSHVPLHYYPHVGVTAAAAAAAASGAAAAASSPFATSIRPLDTFRALSHPYSRPELLCSFRHPGLYQAPAAAAGLNSAASAAAAAAAAAAAASSAAAAGAPPSGGSAPCSCLSCHSSQSAAAAAAAAAAALGSRGGGGGGGGGGGGGGGGAGAGGGSDFGCSAAAPRSESGFLPYSAAVLSKTAVSPPDQRDEAPLTR</sequence>